<name>NADE_SALCH</name>
<sequence>MTLQQEIIQALGAKPHINPEEEIRRSVDFLKAYLKTYPFLKSLVLGISGGQDSTLAGKLSQMAIAELREETGDNALQFIAVRLPYGVQADEQDCQDAIAFIQPDRVLTVNIKGAVLASEQALREAGIELSDFVRGNEKARERMKAQYSIAGMTHGVVVGTDHAAEAITGFFTKYGDGGTDINPLHRLNKRQGKQLLAALGCPEHLYKKVPTADLEDDRPSLPDEAALGVTYDNIDDYLEGKTLDPAIAKTIEGWYVKTEHKRRLPITVFDDFWKR</sequence>
<feature type="chain" id="PRO_1000077594" description="NH(3)-dependent NAD(+) synthetase">
    <location>
        <begin position="1"/>
        <end position="275"/>
    </location>
</feature>
<feature type="binding site" evidence="1">
    <location>
        <begin position="46"/>
        <end position="53"/>
    </location>
    <ligand>
        <name>ATP</name>
        <dbReference type="ChEBI" id="CHEBI:30616"/>
    </ligand>
</feature>
<feature type="binding site" evidence="1">
    <location>
        <position position="52"/>
    </location>
    <ligand>
        <name>Mg(2+)</name>
        <dbReference type="ChEBI" id="CHEBI:18420"/>
    </ligand>
</feature>
<feature type="binding site" evidence="1">
    <location>
        <position position="140"/>
    </location>
    <ligand>
        <name>deamido-NAD(+)</name>
        <dbReference type="ChEBI" id="CHEBI:58437"/>
    </ligand>
</feature>
<feature type="binding site" evidence="1">
    <location>
        <position position="160"/>
    </location>
    <ligand>
        <name>ATP</name>
        <dbReference type="ChEBI" id="CHEBI:30616"/>
    </ligand>
</feature>
<feature type="binding site" evidence="1">
    <location>
        <position position="165"/>
    </location>
    <ligand>
        <name>Mg(2+)</name>
        <dbReference type="ChEBI" id="CHEBI:18420"/>
    </ligand>
</feature>
<feature type="binding site" evidence="1">
    <location>
        <position position="173"/>
    </location>
    <ligand>
        <name>deamido-NAD(+)</name>
        <dbReference type="ChEBI" id="CHEBI:58437"/>
    </ligand>
</feature>
<feature type="binding site" evidence="1">
    <location>
        <position position="180"/>
    </location>
    <ligand>
        <name>deamido-NAD(+)</name>
        <dbReference type="ChEBI" id="CHEBI:58437"/>
    </ligand>
</feature>
<feature type="binding site" evidence="1">
    <location>
        <position position="189"/>
    </location>
    <ligand>
        <name>ATP</name>
        <dbReference type="ChEBI" id="CHEBI:30616"/>
    </ligand>
</feature>
<feature type="binding site" evidence="1">
    <location>
        <position position="211"/>
    </location>
    <ligand>
        <name>ATP</name>
        <dbReference type="ChEBI" id="CHEBI:30616"/>
    </ligand>
</feature>
<feature type="binding site" evidence="1">
    <location>
        <begin position="260"/>
        <end position="261"/>
    </location>
    <ligand>
        <name>deamido-NAD(+)</name>
        <dbReference type="ChEBI" id="CHEBI:58437"/>
    </ligand>
</feature>
<keyword id="KW-0067">ATP-binding</keyword>
<keyword id="KW-0436">Ligase</keyword>
<keyword id="KW-0460">Magnesium</keyword>
<keyword id="KW-0479">Metal-binding</keyword>
<keyword id="KW-0520">NAD</keyword>
<keyword id="KW-0547">Nucleotide-binding</keyword>
<accession>Q57PX4</accession>
<reference key="1">
    <citation type="journal article" date="2005" name="Nucleic Acids Res.">
        <title>The genome sequence of Salmonella enterica serovar Choleraesuis, a highly invasive and resistant zoonotic pathogen.</title>
        <authorList>
            <person name="Chiu C.-H."/>
            <person name="Tang P."/>
            <person name="Chu C."/>
            <person name="Hu S."/>
            <person name="Bao Q."/>
            <person name="Yu J."/>
            <person name="Chou Y.-Y."/>
            <person name="Wang H.-S."/>
            <person name="Lee Y.-S."/>
        </authorList>
    </citation>
    <scope>NUCLEOTIDE SEQUENCE [LARGE SCALE GENOMIC DNA]</scope>
    <source>
        <strain>SC-B67</strain>
    </source>
</reference>
<gene>
    <name evidence="1" type="primary">nadE</name>
    <name type="ordered locus">SCH_1331</name>
</gene>
<protein>
    <recommendedName>
        <fullName evidence="1">NH(3)-dependent NAD(+) synthetase</fullName>
        <ecNumber evidence="1">6.3.1.5</ecNumber>
    </recommendedName>
</protein>
<comment type="function">
    <text evidence="1">Catalyzes the ATP-dependent amidation of deamido-NAD to form NAD. Uses ammonia as a nitrogen source.</text>
</comment>
<comment type="catalytic activity">
    <reaction evidence="1">
        <text>deamido-NAD(+) + NH4(+) + ATP = AMP + diphosphate + NAD(+) + H(+)</text>
        <dbReference type="Rhea" id="RHEA:21188"/>
        <dbReference type="ChEBI" id="CHEBI:15378"/>
        <dbReference type="ChEBI" id="CHEBI:28938"/>
        <dbReference type="ChEBI" id="CHEBI:30616"/>
        <dbReference type="ChEBI" id="CHEBI:33019"/>
        <dbReference type="ChEBI" id="CHEBI:57540"/>
        <dbReference type="ChEBI" id="CHEBI:58437"/>
        <dbReference type="ChEBI" id="CHEBI:456215"/>
        <dbReference type="EC" id="6.3.1.5"/>
    </reaction>
</comment>
<comment type="pathway">
    <text evidence="1">Cofactor biosynthesis; NAD(+) biosynthesis; NAD(+) from deamido-NAD(+) (ammonia route): step 1/1.</text>
</comment>
<comment type="subunit">
    <text evidence="1">Homodimer.</text>
</comment>
<comment type="similarity">
    <text evidence="1">Belongs to the NAD synthetase family.</text>
</comment>
<proteinExistence type="inferred from homology"/>
<organism>
    <name type="scientific">Salmonella choleraesuis (strain SC-B67)</name>
    <dbReference type="NCBI Taxonomy" id="321314"/>
    <lineage>
        <taxon>Bacteria</taxon>
        <taxon>Pseudomonadati</taxon>
        <taxon>Pseudomonadota</taxon>
        <taxon>Gammaproteobacteria</taxon>
        <taxon>Enterobacterales</taxon>
        <taxon>Enterobacteriaceae</taxon>
        <taxon>Salmonella</taxon>
    </lineage>
</organism>
<evidence type="ECO:0000255" key="1">
    <source>
        <dbReference type="HAMAP-Rule" id="MF_00193"/>
    </source>
</evidence>
<dbReference type="EC" id="6.3.1.5" evidence="1"/>
<dbReference type="EMBL" id="AE017220">
    <property type="protein sequence ID" value="AAX65237.1"/>
    <property type="molecule type" value="Genomic_DNA"/>
</dbReference>
<dbReference type="RefSeq" id="WP_000174981.1">
    <property type="nucleotide sequence ID" value="NC_006905.1"/>
</dbReference>
<dbReference type="SMR" id="Q57PX4"/>
<dbReference type="KEGG" id="sec:SCH_1331"/>
<dbReference type="HOGENOM" id="CLU_059327_3_0_6"/>
<dbReference type="UniPathway" id="UPA00253">
    <property type="reaction ID" value="UER00333"/>
</dbReference>
<dbReference type="Proteomes" id="UP000000538">
    <property type="component" value="Chromosome"/>
</dbReference>
<dbReference type="GO" id="GO:0005737">
    <property type="term" value="C:cytoplasm"/>
    <property type="evidence" value="ECO:0007669"/>
    <property type="project" value="InterPro"/>
</dbReference>
<dbReference type="GO" id="GO:0005524">
    <property type="term" value="F:ATP binding"/>
    <property type="evidence" value="ECO:0007669"/>
    <property type="project" value="UniProtKB-UniRule"/>
</dbReference>
<dbReference type="GO" id="GO:0004359">
    <property type="term" value="F:glutaminase activity"/>
    <property type="evidence" value="ECO:0007669"/>
    <property type="project" value="InterPro"/>
</dbReference>
<dbReference type="GO" id="GO:0046872">
    <property type="term" value="F:metal ion binding"/>
    <property type="evidence" value="ECO:0007669"/>
    <property type="project" value="UniProtKB-KW"/>
</dbReference>
<dbReference type="GO" id="GO:0003952">
    <property type="term" value="F:NAD+ synthase (glutamine-hydrolyzing) activity"/>
    <property type="evidence" value="ECO:0007669"/>
    <property type="project" value="InterPro"/>
</dbReference>
<dbReference type="GO" id="GO:0008795">
    <property type="term" value="F:NAD+ synthase activity"/>
    <property type="evidence" value="ECO:0007669"/>
    <property type="project" value="UniProtKB-UniRule"/>
</dbReference>
<dbReference type="GO" id="GO:0009435">
    <property type="term" value="P:NAD biosynthetic process"/>
    <property type="evidence" value="ECO:0007669"/>
    <property type="project" value="UniProtKB-UniRule"/>
</dbReference>
<dbReference type="CDD" id="cd00553">
    <property type="entry name" value="NAD_synthase"/>
    <property type="match status" value="1"/>
</dbReference>
<dbReference type="FunFam" id="3.40.50.620:FF:000015">
    <property type="entry name" value="NH(3)-dependent NAD(+) synthetase"/>
    <property type="match status" value="1"/>
</dbReference>
<dbReference type="Gene3D" id="3.40.50.620">
    <property type="entry name" value="HUPs"/>
    <property type="match status" value="1"/>
</dbReference>
<dbReference type="HAMAP" id="MF_00193">
    <property type="entry name" value="NadE_ammonia_dep"/>
    <property type="match status" value="1"/>
</dbReference>
<dbReference type="InterPro" id="IPR022310">
    <property type="entry name" value="NAD/GMP_synthase"/>
</dbReference>
<dbReference type="InterPro" id="IPR003694">
    <property type="entry name" value="NAD_synthase"/>
</dbReference>
<dbReference type="InterPro" id="IPR022926">
    <property type="entry name" value="NH(3)-dep_NAD(+)_synth"/>
</dbReference>
<dbReference type="InterPro" id="IPR014729">
    <property type="entry name" value="Rossmann-like_a/b/a_fold"/>
</dbReference>
<dbReference type="NCBIfam" id="TIGR00552">
    <property type="entry name" value="nadE"/>
    <property type="match status" value="1"/>
</dbReference>
<dbReference type="NCBIfam" id="NF001979">
    <property type="entry name" value="PRK00768.1"/>
    <property type="match status" value="1"/>
</dbReference>
<dbReference type="PANTHER" id="PTHR23090">
    <property type="entry name" value="NH 3 /GLUTAMINE-DEPENDENT NAD + SYNTHETASE"/>
    <property type="match status" value="1"/>
</dbReference>
<dbReference type="PANTHER" id="PTHR23090:SF7">
    <property type="entry name" value="NH(3)-DEPENDENT NAD(+) SYNTHETASE"/>
    <property type="match status" value="1"/>
</dbReference>
<dbReference type="Pfam" id="PF02540">
    <property type="entry name" value="NAD_synthase"/>
    <property type="match status" value="1"/>
</dbReference>
<dbReference type="SUPFAM" id="SSF52402">
    <property type="entry name" value="Adenine nucleotide alpha hydrolases-like"/>
    <property type="match status" value="1"/>
</dbReference>